<evidence type="ECO:0000255" key="1">
    <source>
        <dbReference type="HAMAP-Rule" id="MF_00020"/>
    </source>
</evidence>
<proteinExistence type="inferred from homology"/>
<feature type="chain" id="PRO_0000107537" description="Acetate kinase">
    <location>
        <begin position="1"/>
        <end position="405"/>
    </location>
</feature>
<feature type="active site" description="Proton donor/acceptor" evidence="1">
    <location>
        <position position="149"/>
    </location>
</feature>
<feature type="binding site" evidence="1">
    <location>
        <position position="7"/>
    </location>
    <ligand>
        <name>Mg(2+)</name>
        <dbReference type="ChEBI" id="CHEBI:18420"/>
    </ligand>
</feature>
<feature type="binding site" evidence="1">
    <location>
        <position position="14"/>
    </location>
    <ligand>
        <name>ATP</name>
        <dbReference type="ChEBI" id="CHEBI:30616"/>
    </ligand>
</feature>
<feature type="binding site" evidence="1">
    <location>
        <position position="92"/>
    </location>
    <ligand>
        <name>substrate</name>
    </ligand>
</feature>
<feature type="binding site" evidence="1">
    <location>
        <begin position="209"/>
        <end position="213"/>
    </location>
    <ligand>
        <name>ATP</name>
        <dbReference type="ChEBI" id="CHEBI:30616"/>
    </ligand>
</feature>
<feature type="binding site" evidence="1">
    <location>
        <begin position="284"/>
        <end position="286"/>
    </location>
    <ligand>
        <name>ATP</name>
        <dbReference type="ChEBI" id="CHEBI:30616"/>
    </ligand>
</feature>
<feature type="binding site" evidence="1">
    <location>
        <position position="389"/>
    </location>
    <ligand>
        <name>Mg(2+)</name>
        <dbReference type="ChEBI" id="CHEBI:18420"/>
    </ligand>
</feature>
<feature type="site" description="Transition state stabilizer" evidence="1">
    <location>
        <position position="181"/>
    </location>
</feature>
<feature type="site" description="Transition state stabilizer" evidence="1">
    <location>
        <position position="242"/>
    </location>
</feature>
<accession>Q660Q0</accession>
<sequence length="405" mass="45619">MKILIINTGSSSLKFAIYQYENSKKLISGVIEKIKEQKSIIKIINTDGSITERFEKGIENHPKAIEKMFKILLNSNSKILKNISEIKIIGHRVVHGGSYFKNSVILKNSNLDKLKQSSKLAPLHNPSAIAAIETVLKILPHAKQVLCFDTSWHQTIKKHAFLYATPYSWYKEHNIRKYGFHGLSYSYVTKRSSEILNKKIDNLNLIILHLGNGASINAVKDGKSYDTSMGITPLEGLVMGTRSGDIDPSIINLMSTILNKNTKQIEEILNKESGILGISEKSNDMRDIWNKIEEGEYQSKLAVEIMTYRVKKYIGSYIAILDFNVDAIVFTGGIGVVDYEVRELALKGFEKIGIELDLEKNKMAQNKNLESEISTIKSKVKILAIPTNEESTILEDIYNLIPKNL</sequence>
<keyword id="KW-0067">ATP-binding</keyword>
<keyword id="KW-0963">Cytoplasm</keyword>
<keyword id="KW-0418">Kinase</keyword>
<keyword id="KW-0460">Magnesium</keyword>
<keyword id="KW-0479">Metal-binding</keyword>
<keyword id="KW-0547">Nucleotide-binding</keyword>
<keyword id="KW-0808">Transferase</keyword>
<name>ACKA_BORGP</name>
<organism>
    <name type="scientific">Borrelia garinii subsp. bavariensis (strain ATCC BAA-2496 / DSM 23469 / PBi)</name>
    <name type="common">Borreliella bavariensis</name>
    <dbReference type="NCBI Taxonomy" id="290434"/>
    <lineage>
        <taxon>Bacteria</taxon>
        <taxon>Pseudomonadati</taxon>
        <taxon>Spirochaetota</taxon>
        <taxon>Spirochaetia</taxon>
        <taxon>Spirochaetales</taxon>
        <taxon>Borreliaceae</taxon>
        <taxon>Borreliella</taxon>
    </lineage>
</organism>
<reference key="1">
    <citation type="journal article" date="2004" name="Nucleic Acids Res.">
        <title>Comparative analysis of the Borrelia garinii genome.</title>
        <authorList>
            <person name="Gloeckner G."/>
            <person name="Lehmann R."/>
            <person name="Romualdi A."/>
            <person name="Pradella S."/>
            <person name="Schulte-Spechtel U."/>
            <person name="Schilhabel M."/>
            <person name="Wilske B."/>
            <person name="Suehnel J."/>
            <person name="Platzer M."/>
        </authorList>
    </citation>
    <scope>NUCLEOTIDE SEQUENCE [LARGE SCALE GENOMIC DNA]</scope>
    <source>
        <strain>ATCC BAA-2496 / DSM 23469 / PBi</strain>
    </source>
</reference>
<dbReference type="EC" id="2.7.2.1" evidence="1"/>
<dbReference type="EMBL" id="CP000013">
    <property type="protein sequence ID" value="AAU07471.1"/>
    <property type="molecule type" value="Genomic_DNA"/>
</dbReference>
<dbReference type="RefSeq" id="WP_011193929.1">
    <property type="nucleotide sequence ID" value="NZ_CP028872.1"/>
</dbReference>
<dbReference type="SMR" id="Q660Q0"/>
<dbReference type="GeneID" id="45161419"/>
<dbReference type="KEGG" id="bga:BG0641"/>
<dbReference type="eggNOG" id="COG0282">
    <property type="taxonomic scope" value="Bacteria"/>
</dbReference>
<dbReference type="HOGENOM" id="CLU_020352_0_1_12"/>
<dbReference type="OrthoDB" id="9802453at2"/>
<dbReference type="UniPathway" id="UPA00340">
    <property type="reaction ID" value="UER00458"/>
</dbReference>
<dbReference type="Proteomes" id="UP000002276">
    <property type="component" value="Chromosome"/>
</dbReference>
<dbReference type="GO" id="GO:0005737">
    <property type="term" value="C:cytoplasm"/>
    <property type="evidence" value="ECO:0007669"/>
    <property type="project" value="UniProtKB-SubCell"/>
</dbReference>
<dbReference type="GO" id="GO:0008776">
    <property type="term" value="F:acetate kinase activity"/>
    <property type="evidence" value="ECO:0007669"/>
    <property type="project" value="UniProtKB-UniRule"/>
</dbReference>
<dbReference type="GO" id="GO:0005524">
    <property type="term" value="F:ATP binding"/>
    <property type="evidence" value="ECO:0007669"/>
    <property type="project" value="UniProtKB-KW"/>
</dbReference>
<dbReference type="GO" id="GO:0000287">
    <property type="term" value="F:magnesium ion binding"/>
    <property type="evidence" value="ECO:0007669"/>
    <property type="project" value="UniProtKB-UniRule"/>
</dbReference>
<dbReference type="GO" id="GO:0006083">
    <property type="term" value="P:acetate metabolic process"/>
    <property type="evidence" value="ECO:0007669"/>
    <property type="project" value="TreeGrafter"/>
</dbReference>
<dbReference type="GO" id="GO:0006085">
    <property type="term" value="P:acetyl-CoA biosynthetic process"/>
    <property type="evidence" value="ECO:0007669"/>
    <property type="project" value="UniProtKB-UniRule"/>
</dbReference>
<dbReference type="CDD" id="cd24010">
    <property type="entry name" value="ASKHA_NBD_AcK_PK"/>
    <property type="match status" value="1"/>
</dbReference>
<dbReference type="Gene3D" id="3.30.420.40">
    <property type="match status" value="2"/>
</dbReference>
<dbReference type="HAMAP" id="MF_00020">
    <property type="entry name" value="Acetate_kinase"/>
    <property type="match status" value="1"/>
</dbReference>
<dbReference type="InterPro" id="IPR004372">
    <property type="entry name" value="Ac/propionate_kinase"/>
</dbReference>
<dbReference type="InterPro" id="IPR000890">
    <property type="entry name" value="Aliphatic_acid_kin_short-chain"/>
</dbReference>
<dbReference type="InterPro" id="IPR023865">
    <property type="entry name" value="Aliphatic_acid_kinase_CS"/>
</dbReference>
<dbReference type="InterPro" id="IPR043129">
    <property type="entry name" value="ATPase_NBD"/>
</dbReference>
<dbReference type="NCBIfam" id="TIGR00016">
    <property type="entry name" value="ackA"/>
    <property type="match status" value="1"/>
</dbReference>
<dbReference type="PANTHER" id="PTHR21060">
    <property type="entry name" value="ACETATE KINASE"/>
    <property type="match status" value="1"/>
</dbReference>
<dbReference type="PANTHER" id="PTHR21060:SF15">
    <property type="entry name" value="ACETATE KINASE-RELATED"/>
    <property type="match status" value="1"/>
</dbReference>
<dbReference type="Pfam" id="PF00871">
    <property type="entry name" value="Acetate_kinase"/>
    <property type="match status" value="1"/>
</dbReference>
<dbReference type="PIRSF" id="PIRSF000722">
    <property type="entry name" value="Acetate_prop_kin"/>
    <property type="match status" value="1"/>
</dbReference>
<dbReference type="PRINTS" id="PR00471">
    <property type="entry name" value="ACETATEKNASE"/>
</dbReference>
<dbReference type="SUPFAM" id="SSF53067">
    <property type="entry name" value="Actin-like ATPase domain"/>
    <property type="match status" value="2"/>
</dbReference>
<dbReference type="PROSITE" id="PS01075">
    <property type="entry name" value="ACETATE_KINASE_1"/>
    <property type="match status" value="1"/>
</dbReference>
<dbReference type="PROSITE" id="PS01076">
    <property type="entry name" value="ACETATE_KINASE_2"/>
    <property type="match status" value="1"/>
</dbReference>
<comment type="function">
    <text evidence="1">Catalyzes the formation of acetyl phosphate from acetate and ATP. Can also catalyze the reverse reaction.</text>
</comment>
<comment type="catalytic activity">
    <reaction evidence="1">
        <text>acetate + ATP = acetyl phosphate + ADP</text>
        <dbReference type="Rhea" id="RHEA:11352"/>
        <dbReference type="ChEBI" id="CHEBI:22191"/>
        <dbReference type="ChEBI" id="CHEBI:30089"/>
        <dbReference type="ChEBI" id="CHEBI:30616"/>
        <dbReference type="ChEBI" id="CHEBI:456216"/>
        <dbReference type="EC" id="2.7.2.1"/>
    </reaction>
</comment>
<comment type="cofactor">
    <cofactor evidence="1">
        <name>Mg(2+)</name>
        <dbReference type="ChEBI" id="CHEBI:18420"/>
    </cofactor>
    <cofactor evidence="1">
        <name>Mn(2+)</name>
        <dbReference type="ChEBI" id="CHEBI:29035"/>
    </cofactor>
    <text evidence="1">Mg(2+). Can also accept Mn(2+).</text>
</comment>
<comment type="pathway">
    <text evidence="1">Metabolic intermediate biosynthesis; acetyl-CoA biosynthesis; acetyl-CoA from acetate: step 1/2.</text>
</comment>
<comment type="subunit">
    <text evidence="1">Homodimer.</text>
</comment>
<comment type="subcellular location">
    <subcellularLocation>
        <location evidence="1">Cytoplasm</location>
    </subcellularLocation>
</comment>
<comment type="similarity">
    <text evidence="1">Belongs to the acetokinase family.</text>
</comment>
<protein>
    <recommendedName>
        <fullName evidence="1">Acetate kinase</fullName>
        <ecNumber evidence="1">2.7.2.1</ecNumber>
    </recommendedName>
    <alternativeName>
        <fullName evidence="1">Acetokinase</fullName>
    </alternativeName>
</protein>
<gene>
    <name evidence="1" type="primary">ackA</name>
    <name type="ordered locus">BG0641</name>
</gene>